<comment type="function">
    <text evidence="4 5">Cytochrome P450 monooxygenase; part of the gene cluster that mediates the biosynthesis of itaconic acid and 2-hydroxyparaconate (PubMed:26639528, PubMed:27750034). Cis-aconitate is secreted by the mitochondrial tricarboxylate transporter MTT1. In the cytosol cis-aconitate is converted into trans-aconitate via isomerization by the aconitate-delta-isomerase ADI1 (PubMed:26639528). Decarboxylation of trans-aconitate by the trans-aconitate decarboxylase TAD1 then leads then to the production of itaconic acid (PubMed:26639528). The cytochrome P450 monooxygenase CYP3 further converts itaconate to 2-hydroxyparaconate via oxidation of the double bond, leading to a transient epoxide, which can subsequently be lactonized to produce 2-hydroxyparaconate (PubMed:27750034). Secretion of itaconate and possibly 2-hydroxyparaconate into the medium is mediated by the major facilitator ITP1 (PubMed:26639528, PubMed:27750034). The glyoxalase domain-containing protein RDO1 is not involved in the biosynthesis of itaconate and 2-hydroxyparaconate, however, it might play a role in the further conversion of 2-hydroxyparaconate to itatartarate (PubMed:27750034).</text>
</comment>
<comment type="cofactor">
    <cofactor evidence="1">
        <name>heme</name>
        <dbReference type="ChEBI" id="CHEBI:30413"/>
    </cofactor>
</comment>
<comment type="pathway">
    <text evidence="5">Secondary metabolite biosynthesis.</text>
</comment>
<comment type="subcellular location">
    <subcellularLocation>
        <location evidence="2">Membrane</location>
        <topology evidence="2">Single-pass membrane protein</topology>
    </subcellularLocation>
</comment>
<comment type="disruption phenotype">
    <text evidence="4 5">Does not affect the itaconic acid production (PubMed:26639528). Abolishes completely the production of 2-hydroxyparaconate (PubMed:27750034).</text>
</comment>
<comment type="similarity">
    <text evidence="8">Belongs to the cytochrome P450 family.</text>
</comment>
<name>CYP3_MYCMD</name>
<gene>
    <name evidence="6" type="primary">CYP3</name>
    <name type="ORF">UMAG_05074</name>
</gene>
<feature type="chain" id="PRO_0000438677" description="Cytochrome P450 monooxygenase CYP3">
    <location>
        <begin position="1"/>
        <end position="540"/>
    </location>
</feature>
<feature type="transmembrane region" description="Helical" evidence="2">
    <location>
        <begin position="26"/>
        <end position="46"/>
    </location>
</feature>
<feature type="binding site" description="axial binding residue" evidence="1">
    <location>
        <position position="471"/>
    </location>
    <ligand>
        <name>heme</name>
        <dbReference type="ChEBI" id="CHEBI:30413"/>
    </ligand>
    <ligandPart>
        <name>Fe</name>
        <dbReference type="ChEBI" id="CHEBI:18248"/>
    </ligandPart>
</feature>
<feature type="glycosylation site" description="N-linked (GlcNAc...) asparagine" evidence="3">
    <location>
        <position position="2"/>
    </location>
</feature>
<feature type="glycosylation site" description="N-linked (GlcNAc...) asparagine" evidence="3">
    <location>
        <position position="100"/>
    </location>
</feature>
<feature type="glycosylation site" description="N-linked (GlcNAc...) asparagine" evidence="3">
    <location>
        <position position="210"/>
    </location>
</feature>
<feature type="glycosylation site" description="N-linked (GlcNAc...) asparagine" evidence="3">
    <location>
        <position position="400"/>
    </location>
</feature>
<organism>
    <name type="scientific">Mycosarcoma maydis</name>
    <name type="common">Corn smut fungus</name>
    <name type="synonym">Ustilago maydis</name>
    <dbReference type="NCBI Taxonomy" id="5270"/>
    <lineage>
        <taxon>Eukaryota</taxon>
        <taxon>Fungi</taxon>
        <taxon>Dikarya</taxon>
        <taxon>Basidiomycota</taxon>
        <taxon>Ustilaginomycotina</taxon>
        <taxon>Ustilaginomycetes</taxon>
        <taxon>Ustilaginales</taxon>
        <taxon>Ustilaginaceae</taxon>
        <taxon>Mycosarcoma</taxon>
    </lineage>
</organism>
<reference key="1">
    <citation type="journal article" date="2016" name="Microb. Biotechnol.">
        <title>Ustilago maydis produces itaconic acid via the unusual intermediate trans-aconitate.</title>
        <authorList>
            <person name="Geiser E."/>
            <person name="Przybilla S.K."/>
            <person name="Friedrich A."/>
            <person name="Buckel W."/>
            <person name="Wierckx N."/>
            <person name="Blank L.M."/>
            <person name="Boelker M."/>
        </authorList>
    </citation>
    <scope>NUCLEOTIDE SEQUENCE [GENOMIC DNA]</scope>
    <scope>FUNCTION</scope>
    <scope>DISRUPTION PHENOTYPE</scope>
    <source>
        <strain>MB215</strain>
    </source>
</reference>
<reference key="2">
    <citation type="journal article" date="2016" name="Metab. Eng.">
        <title>Genetic and biochemical insights into the itaconate pathway of Ustilago maydis enable enhanced production.</title>
        <authorList>
            <person name="Geiser E."/>
            <person name="Przybilla S.K."/>
            <person name="Engel M."/>
            <person name="Kleineberg W."/>
            <person name="Buettner L."/>
            <person name="Sarikaya E."/>
            <person name="Hartog T.D."/>
            <person name="Klankermayer J."/>
            <person name="Leitner W."/>
            <person name="Boelker M."/>
            <person name="Blank L.M."/>
            <person name="Wierckx N."/>
        </authorList>
    </citation>
    <scope>FUNCTION</scope>
    <scope>CATALYTIC ACTIVITY</scope>
    <scope>DISRUPTION PHENOTYPE</scope>
    <scope>PATHWAY</scope>
</reference>
<evidence type="ECO:0000250" key="1">
    <source>
        <dbReference type="UniProtKB" id="P04798"/>
    </source>
</evidence>
<evidence type="ECO:0000255" key="2"/>
<evidence type="ECO:0000255" key="3">
    <source>
        <dbReference type="PROSITE-ProRule" id="PRU00498"/>
    </source>
</evidence>
<evidence type="ECO:0000269" key="4">
    <source>
    </source>
</evidence>
<evidence type="ECO:0000269" key="5">
    <source>
    </source>
</evidence>
<evidence type="ECO:0000303" key="6">
    <source>
    </source>
</evidence>
<evidence type="ECO:0000303" key="7">
    <source>
    </source>
</evidence>
<evidence type="ECO:0000305" key="8"/>
<dbReference type="EC" id="1.-.-.-" evidence="5"/>
<dbReference type="EMBL" id="KT852988">
    <property type="protein sequence ID" value="ALS30800.1"/>
    <property type="molecule type" value="Genomic_DNA"/>
</dbReference>
<dbReference type="RefSeq" id="XP_011388154.1">
    <property type="nucleotide sequence ID" value="XM_011389852.1"/>
</dbReference>
<dbReference type="SMR" id="A0A0U2V7I8"/>
<dbReference type="GlyCosmos" id="A0A0U2V7I8">
    <property type="glycosylation" value="4 sites, No reported glycans"/>
</dbReference>
<dbReference type="GeneID" id="23565065"/>
<dbReference type="KEGG" id="uma:UMAG_05074"/>
<dbReference type="VEuPathDB" id="FungiDB:UMAG_05074"/>
<dbReference type="OMA" id="RSVHMDE"/>
<dbReference type="BioCyc" id="MetaCyc:MONOMER-20619"/>
<dbReference type="GO" id="GO:0016020">
    <property type="term" value="C:membrane"/>
    <property type="evidence" value="ECO:0007669"/>
    <property type="project" value="UniProtKB-SubCell"/>
</dbReference>
<dbReference type="GO" id="GO:0020037">
    <property type="term" value="F:heme binding"/>
    <property type="evidence" value="ECO:0007669"/>
    <property type="project" value="InterPro"/>
</dbReference>
<dbReference type="GO" id="GO:0005506">
    <property type="term" value="F:iron ion binding"/>
    <property type="evidence" value="ECO:0007669"/>
    <property type="project" value="InterPro"/>
</dbReference>
<dbReference type="GO" id="GO:0004497">
    <property type="term" value="F:monooxygenase activity"/>
    <property type="evidence" value="ECO:0007669"/>
    <property type="project" value="UniProtKB-KW"/>
</dbReference>
<dbReference type="GO" id="GO:0016705">
    <property type="term" value="F:oxidoreductase activity, acting on paired donors, with incorporation or reduction of molecular oxygen"/>
    <property type="evidence" value="ECO:0007669"/>
    <property type="project" value="InterPro"/>
</dbReference>
<dbReference type="Gene3D" id="1.10.630.10">
    <property type="entry name" value="Cytochrome P450"/>
    <property type="match status" value="1"/>
</dbReference>
<dbReference type="InterPro" id="IPR001128">
    <property type="entry name" value="Cyt_P450"/>
</dbReference>
<dbReference type="InterPro" id="IPR017972">
    <property type="entry name" value="Cyt_P450_CS"/>
</dbReference>
<dbReference type="InterPro" id="IPR002401">
    <property type="entry name" value="Cyt_P450_E_grp-I"/>
</dbReference>
<dbReference type="InterPro" id="IPR036396">
    <property type="entry name" value="Cyt_P450_sf"/>
</dbReference>
<dbReference type="InterPro" id="IPR050364">
    <property type="entry name" value="Cytochrome_P450_fung"/>
</dbReference>
<dbReference type="PANTHER" id="PTHR46300">
    <property type="entry name" value="P450, PUTATIVE (EUROFUNG)-RELATED-RELATED"/>
    <property type="match status" value="1"/>
</dbReference>
<dbReference type="PANTHER" id="PTHR46300:SF9">
    <property type="entry name" value="P450, PUTATIVE-RELATED"/>
    <property type="match status" value="1"/>
</dbReference>
<dbReference type="Pfam" id="PF00067">
    <property type="entry name" value="p450"/>
    <property type="match status" value="1"/>
</dbReference>
<dbReference type="PRINTS" id="PR00463">
    <property type="entry name" value="EP450I"/>
</dbReference>
<dbReference type="PRINTS" id="PR00385">
    <property type="entry name" value="P450"/>
</dbReference>
<dbReference type="SUPFAM" id="SSF48264">
    <property type="entry name" value="Cytochrome P450"/>
    <property type="match status" value="1"/>
</dbReference>
<dbReference type="PROSITE" id="PS00086">
    <property type="entry name" value="CYTOCHROME_P450"/>
    <property type="match status" value="1"/>
</dbReference>
<proteinExistence type="evidence at protein level"/>
<protein>
    <recommendedName>
        <fullName evidence="7">Cytochrome P450 monooxygenase CYP3</fullName>
        <ecNumber evidence="5">1.-.-.-</ecNumber>
    </recommendedName>
    <alternativeName>
        <fullName evidence="8">Itaconic acid/2-hydroxyparaconate biosynthesis cluster protein CYP3</fullName>
    </alternativeName>
</protein>
<accession>A0A0U2V7I8</accession>
<sequence>MNTTKLLGTGALSPSFVFDHDSGNAIFGLSSSTLVVLVAMIAVSTLTLKSVLPGDRSINLPGPRGWPIVGSWFDLGNNWAEYFRQAAKEYGDVFKVHIGNRTVVVVNSPKAAHILFNEHGSSLISRPWFYTFHGVLSKSSAFTIGTSAWSDSTKNKRKAAATALNRPAVQSYMPIIVEESLDAVRRILNDGNAGKNGIVPYSYFQRLALNTSFQVNYGFRMGERDDGLFDEISEVIAKVASVRAVTGSLQDYVPLMRYLPANAKSKAAASYGLRRKKFMSKLYEELEQRVNQGKDESCITGNILKDTESRKKLSRLEIDSICLSMVSAGLDTFANTMIWTIGFLAKHPEIQRKAQAELLAHYPNRELPHVDSEDLVYIHAMAKEASRLFNVFRICLPRTNVSDVTYNNAVIPAGTTFFLNSWACNVDAEKFADPFEFKPERFMDKSASNAHVENKMGGVETYAFGMGRRMCPGVFLALREIYTTLVFLTHFFDIAPDGEYDIDPLTAVEDGRAFSVRPKPFKVRCTPRPGVDLSPVLDKQ</sequence>
<keyword id="KW-0325">Glycoprotein</keyword>
<keyword id="KW-0349">Heme</keyword>
<keyword id="KW-0408">Iron</keyword>
<keyword id="KW-0472">Membrane</keyword>
<keyword id="KW-0479">Metal-binding</keyword>
<keyword id="KW-0503">Monooxygenase</keyword>
<keyword id="KW-0560">Oxidoreductase</keyword>
<keyword id="KW-0812">Transmembrane</keyword>
<keyword id="KW-1133">Transmembrane helix</keyword>